<protein>
    <recommendedName>
        <fullName evidence="1">Ribosomal protein L11 methyltransferase</fullName>
        <shortName evidence="1">L11 Mtase</shortName>
        <ecNumber evidence="1">2.1.1.-</ecNumber>
    </recommendedName>
</protein>
<organism>
    <name type="scientific">Trichormus variabilis (strain ATCC 29413 / PCC 7937)</name>
    <name type="common">Anabaena variabilis</name>
    <dbReference type="NCBI Taxonomy" id="240292"/>
    <lineage>
        <taxon>Bacteria</taxon>
        <taxon>Bacillati</taxon>
        <taxon>Cyanobacteriota</taxon>
        <taxon>Cyanophyceae</taxon>
        <taxon>Nostocales</taxon>
        <taxon>Nostocaceae</taxon>
        <taxon>Trichormus</taxon>
    </lineage>
</organism>
<gene>
    <name evidence="1" type="primary">prmA</name>
    <name type="ordered locus">Ava_3760</name>
</gene>
<keyword id="KW-0963">Cytoplasm</keyword>
<keyword id="KW-0489">Methyltransferase</keyword>
<keyword id="KW-0949">S-adenosyl-L-methionine</keyword>
<keyword id="KW-0808">Transferase</keyword>
<evidence type="ECO:0000255" key="1">
    <source>
        <dbReference type="HAMAP-Rule" id="MF_00735"/>
    </source>
</evidence>
<reference key="1">
    <citation type="journal article" date="2014" name="Stand. Genomic Sci.">
        <title>Complete genome sequence of Anabaena variabilis ATCC 29413.</title>
        <authorList>
            <person name="Thiel T."/>
            <person name="Pratte B.S."/>
            <person name="Zhong J."/>
            <person name="Goodwin L."/>
            <person name="Copeland A."/>
            <person name="Lucas S."/>
            <person name="Han C."/>
            <person name="Pitluck S."/>
            <person name="Land M.L."/>
            <person name="Kyrpides N.C."/>
            <person name="Woyke T."/>
        </authorList>
    </citation>
    <scope>NUCLEOTIDE SEQUENCE [LARGE SCALE GENOMIC DNA]</scope>
    <source>
        <strain>ATCC 29413 / PCC 7937</strain>
    </source>
</reference>
<name>PRMA_TRIV2</name>
<accession>Q3M6M1</accession>
<proteinExistence type="inferred from homology"/>
<comment type="function">
    <text evidence="1">Methylates ribosomal protein L11.</text>
</comment>
<comment type="catalytic activity">
    <reaction evidence="1">
        <text>L-lysyl-[protein] + 3 S-adenosyl-L-methionine = N(6),N(6),N(6)-trimethyl-L-lysyl-[protein] + 3 S-adenosyl-L-homocysteine + 3 H(+)</text>
        <dbReference type="Rhea" id="RHEA:54192"/>
        <dbReference type="Rhea" id="RHEA-COMP:9752"/>
        <dbReference type="Rhea" id="RHEA-COMP:13826"/>
        <dbReference type="ChEBI" id="CHEBI:15378"/>
        <dbReference type="ChEBI" id="CHEBI:29969"/>
        <dbReference type="ChEBI" id="CHEBI:57856"/>
        <dbReference type="ChEBI" id="CHEBI:59789"/>
        <dbReference type="ChEBI" id="CHEBI:61961"/>
    </reaction>
</comment>
<comment type="subcellular location">
    <subcellularLocation>
        <location evidence="1">Cytoplasm</location>
    </subcellularLocation>
</comment>
<comment type="similarity">
    <text evidence="1">Belongs to the methyltransferase superfamily. PrmA family.</text>
</comment>
<sequence length="306" mass="33895">MANTWWEIQILCESALEDSVSWRLEDFGCRGTASESKGDSCLVKGYLPIFQAQLLDLAALGLWLQQDALCIGLSSPTLTWQLIDEEDWASSWKQYWHPQEIGDRFLINPAWLPSPENYDRLVIRLDPGVAFGTGNHATTQLCLESLEMRLSQVPKSFVSKDAGQEPVIIADIGCGSGILSIGAILLGAEKVYAVDTDPLAVQSTFSNRALNEVNPERLVPAEGSVDILKKLIERPVDGIVCNILADVIIQLVPEISEISKPSTWAIFSGILVEQSTSVVEALEKHGWVVATMWKRKEWCCLNVRRT</sequence>
<feature type="chain" id="PRO_1000045982" description="Ribosomal protein L11 methyltransferase">
    <location>
        <begin position="1"/>
        <end position="306"/>
    </location>
</feature>
<feature type="binding site" evidence="1">
    <location>
        <position position="139"/>
    </location>
    <ligand>
        <name>S-adenosyl-L-methionine</name>
        <dbReference type="ChEBI" id="CHEBI:59789"/>
    </ligand>
</feature>
<feature type="binding site" evidence="1">
    <location>
        <position position="173"/>
    </location>
    <ligand>
        <name>S-adenosyl-L-methionine</name>
        <dbReference type="ChEBI" id="CHEBI:59789"/>
    </ligand>
</feature>
<feature type="binding site" evidence="1">
    <location>
        <position position="195"/>
    </location>
    <ligand>
        <name>S-adenosyl-L-methionine</name>
        <dbReference type="ChEBI" id="CHEBI:59789"/>
    </ligand>
</feature>
<feature type="binding site" evidence="1">
    <location>
        <position position="242"/>
    </location>
    <ligand>
        <name>S-adenosyl-L-methionine</name>
        <dbReference type="ChEBI" id="CHEBI:59789"/>
    </ligand>
</feature>
<dbReference type="EC" id="2.1.1.-" evidence="1"/>
<dbReference type="EMBL" id="CP000117">
    <property type="protein sequence ID" value="ABA23365.1"/>
    <property type="molecule type" value="Genomic_DNA"/>
</dbReference>
<dbReference type="SMR" id="Q3M6M1"/>
<dbReference type="STRING" id="240292.Ava_3760"/>
<dbReference type="KEGG" id="ava:Ava_3760"/>
<dbReference type="eggNOG" id="COG2264">
    <property type="taxonomic scope" value="Bacteria"/>
</dbReference>
<dbReference type="HOGENOM" id="CLU_049382_0_1_3"/>
<dbReference type="Proteomes" id="UP000002533">
    <property type="component" value="Chromosome"/>
</dbReference>
<dbReference type="GO" id="GO:0005737">
    <property type="term" value="C:cytoplasm"/>
    <property type="evidence" value="ECO:0007669"/>
    <property type="project" value="UniProtKB-SubCell"/>
</dbReference>
<dbReference type="GO" id="GO:0016279">
    <property type="term" value="F:protein-lysine N-methyltransferase activity"/>
    <property type="evidence" value="ECO:0007669"/>
    <property type="project" value="RHEA"/>
</dbReference>
<dbReference type="GO" id="GO:0032259">
    <property type="term" value="P:methylation"/>
    <property type="evidence" value="ECO:0007669"/>
    <property type="project" value="UniProtKB-KW"/>
</dbReference>
<dbReference type="CDD" id="cd02440">
    <property type="entry name" value="AdoMet_MTases"/>
    <property type="match status" value="1"/>
</dbReference>
<dbReference type="Gene3D" id="3.40.50.150">
    <property type="entry name" value="Vaccinia Virus protein VP39"/>
    <property type="match status" value="1"/>
</dbReference>
<dbReference type="HAMAP" id="MF_00735">
    <property type="entry name" value="Methyltr_PrmA"/>
    <property type="match status" value="1"/>
</dbReference>
<dbReference type="InterPro" id="IPR050078">
    <property type="entry name" value="Ribosomal_L11_MeTrfase_PrmA"/>
</dbReference>
<dbReference type="InterPro" id="IPR004498">
    <property type="entry name" value="Ribosomal_PrmA_MeTrfase"/>
</dbReference>
<dbReference type="InterPro" id="IPR029063">
    <property type="entry name" value="SAM-dependent_MTases_sf"/>
</dbReference>
<dbReference type="NCBIfam" id="TIGR00406">
    <property type="entry name" value="prmA"/>
    <property type="match status" value="1"/>
</dbReference>
<dbReference type="PANTHER" id="PTHR43648">
    <property type="entry name" value="ELECTRON TRANSFER FLAVOPROTEIN BETA SUBUNIT LYSINE METHYLTRANSFERASE"/>
    <property type="match status" value="1"/>
</dbReference>
<dbReference type="PANTHER" id="PTHR43648:SF1">
    <property type="entry name" value="ELECTRON TRANSFER FLAVOPROTEIN BETA SUBUNIT LYSINE METHYLTRANSFERASE"/>
    <property type="match status" value="1"/>
</dbReference>
<dbReference type="Pfam" id="PF06325">
    <property type="entry name" value="PrmA"/>
    <property type="match status" value="1"/>
</dbReference>
<dbReference type="PIRSF" id="PIRSF000401">
    <property type="entry name" value="RPL11_MTase"/>
    <property type="match status" value="1"/>
</dbReference>
<dbReference type="SUPFAM" id="SSF53335">
    <property type="entry name" value="S-adenosyl-L-methionine-dependent methyltransferases"/>
    <property type="match status" value="1"/>
</dbReference>